<dbReference type="EMBL" id="X14668">
    <property type="protein sequence ID" value="CAA32796.1"/>
    <property type="molecule type" value="Genomic_DNA"/>
</dbReference>
<dbReference type="SMR" id="P20771"/>
<dbReference type="GO" id="GO:0003824">
    <property type="term" value="F:catalytic activity"/>
    <property type="evidence" value="ECO:0007669"/>
    <property type="project" value="InterPro"/>
</dbReference>
<dbReference type="Gene3D" id="3.90.1300.10">
    <property type="entry name" value="Amidase signature (AS) domain"/>
    <property type="match status" value="1"/>
</dbReference>
<dbReference type="InterPro" id="IPR000120">
    <property type="entry name" value="Amidase"/>
</dbReference>
<dbReference type="InterPro" id="IPR023631">
    <property type="entry name" value="Amidase_dom"/>
</dbReference>
<dbReference type="InterPro" id="IPR036928">
    <property type="entry name" value="AS_sf"/>
</dbReference>
<dbReference type="PANTHER" id="PTHR11895:SF170">
    <property type="entry name" value="AMIDASE"/>
    <property type="match status" value="1"/>
</dbReference>
<dbReference type="PANTHER" id="PTHR11895">
    <property type="entry name" value="TRANSAMIDASE"/>
    <property type="match status" value="1"/>
</dbReference>
<dbReference type="Pfam" id="PF01425">
    <property type="entry name" value="Amidase"/>
    <property type="match status" value="1"/>
</dbReference>
<dbReference type="SUPFAM" id="SSF75304">
    <property type="entry name" value="Amidase signature (AS) enzymes"/>
    <property type="match status" value="1"/>
</dbReference>
<protein>
    <recommendedName>
        <fullName>Uncharacterized protein in nthA 5'region</fullName>
    </recommendedName>
</protein>
<proteinExistence type="predicted"/>
<sequence length="199" mass="21123">HAFHIWNVIATDGGAYQMLDGNGYGMNAEGLYDPELMAHFASRRIQHADALSETVKLVALTGHHGITTLGGASYGKARNLVPLARAAYDTALRQFDVLVMPTLPYVASELPAKDVDRATFITKALGMIANTAPFDVTGHPSLSVPAGLVNGVPVGMMITGRHFDDATVLRVGRAFEKLRGAFPTPAERASNSAPQLSPA</sequence>
<feature type="chain" id="PRO_0000066325" description="Uncharacterized protein in nthA 5'region">
    <location>
        <begin position="1" status="less than"/>
        <end position="199"/>
    </location>
</feature>
<feature type="non-terminal residue">
    <location>
        <position position="1"/>
    </location>
</feature>
<accession>P20771</accession>
<reference key="1">
    <citation type="journal article" date="1989" name="Eur. J. Biochem.">
        <title>Primary structure of nitrile hydratase deduced from the nucleotide sequence of a Rhodococcus species and its expression in Escherichia coli.</title>
        <authorList>
            <person name="Ikehata O."/>
            <person name="Nishiyama M."/>
            <person name="Horinouchi S."/>
            <person name="Beppu T."/>
        </authorList>
    </citation>
    <scope>NUCLEOTIDE SEQUENCE [GENOMIC DNA]</scope>
    <source>
        <strain>N-774</strain>
    </source>
</reference>
<organism>
    <name type="scientific">Rhodococcus erythropolis</name>
    <name type="common">Arthrobacter picolinophilus</name>
    <dbReference type="NCBI Taxonomy" id="1833"/>
    <lineage>
        <taxon>Bacteria</taxon>
        <taxon>Bacillati</taxon>
        <taxon>Actinomycetota</taxon>
        <taxon>Actinomycetes</taxon>
        <taxon>Mycobacteriales</taxon>
        <taxon>Nocardiaceae</taxon>
        <taxon>Rhodococcus</taxon>
        <taxon>Rhodococcus erythropolis group</taxon>
    </lineage>
</organism>
<name>YNHA_RHOER</name>